<evidence type="ECO:0000255" key="1">
    <source>
        <dbReference type="HAMAP-Rule" id="MF_00679"/>
    </source>
</evidence>
<accession>Q9JS04</accession>
<reference key="1">
    <citation type="journal article" date="2000" name="Science">
        <title>Complete genome sequence of Neisseria meningitidis serogroup B strain MC58.</title>
        <authorList>
            <person name="Tettelin H."/>
            <person name="Saunders N.J."/>
            <person name="Heidelberg J.F."/>
            <person name="Jeffries A.C."/>
            <person name="Nelson K.E."/>
            <person name="Eisen J.A."/>
            <person name="Ketchum K.A."/>
            <person name="Hood D.W."/>
            <person name="Peden J.F."/>
            <person name="Dodson R.J."/>
            <person name="Nelson W.C."/>
            <person name="Gwinn M.L."/>
            <person name="DeBoy R.T."/>
            <person name="Peterson J.D."/>
            <person name="Hickey E.K."/>
            <person name="Haft D.H."/>
            <person name="Salzberg S.L."/>
            <person name="White O."/>
            <person name="Fleischmann R.D."/>
            <person name="Dougherty B.A."/>
            <person name="Mason T.M."/>
            <person name="Ciecko A."/>
            <person name="Parksey D.S."/>
            <person name="Blair E."/>
            <person name="Cittone H."/>
            <person name="Clark E.B."/>
            <person name="Cotton M.D."/>
            <person name="Utterback T.R."/>
            <person name="Khouri H.M."/>
            <person name="Qin H."/>
            <person name="Vamathevan J.J."/>
            <person name="Gill J."/>
            <person name="Scarlato V."/>
            <person name="Masignani V."/>
            <person name="Pizza M."/>
            <person name="Grandi G."/>
            <person name="Sun L."/>
            <person name="Smith H.O."/>
            <person name="Fraser C.M."/>
            <person name="Moxon E.R."/>
            <person name="Rappuoli R."/>
            <person name="Venter J.C."/>
        </authorList>
    </citation>
    <scope>NUCLEOTIDE SEQUENCE [LARGE SCALE GENOMIC DNA]</scope>
    <source>
        <strain>ATCC BAA-335 / MC58</strain>
    </source>
</reference>
<dbReference type="EMBL" id="AE002098">
    <property type="protein sequence ID" value="AAF41554.1"/>
    <property type="molecule type" value="Genomic_DNA"/>
</dbReference>
<dbReference type="EMBL" id="AE002098">
    <property type="protein sequence ID" value="AAF41519.1"/>
    <property type="molecule type" value="Genomic_DNA"/>
</dbReference>
<dbReference type="PIR" id="B81118">
    <property type="entry name" value="B81118"/>
</dbReference>
<dbReference type="RefSeq" id="NP_274160.1">
    <property type="nucleotide sequence ID" value="NC_003112.2"/>
</dbReference>
<dbReference type="RefSeq" id="NP_274196.1">
    <property type="nucleotide sequence ID" value="NC_003112.2"/>
</dbReference>
<dbReference type="RefSeq" id="WP_002244129.1">
    <property type="nucleotide sequence ID" value="NC_003112.2"/>
</dbReference>
<dbReference type="SMR" id="Q9JS04"/>
<dbReference type="FunCoup" id="Q9JS04">
    <property type="interactions" value="97"/>
</dbReference>
<dbReference type="STRING" id="122586.NMB1131"/>
<dbReference type="PaxDb" id="122586-NMB1131"/>
<dbReference type="KEGG" id="nme:NMB1131"/>
<dbReference type="KEGG" id="nme:NMB1169"/>
<dbReference type="PATRIC" id="fig|122586.8.peg.1434"/>
<dbReference type="HOGENOM" id="CLU_005965_2_1_4"/>
<dbReference type="InParanoid" id="Q9JS04"/>
<dbReference type="OrthoDB" id="9766019at2"/>
<dbReference type="Proteomes" id="UP000000425">
    <property type="component" value="Chromosome"/>
</dbReference>
<dbReference type="GO" id="GO:0005829">
    <property type="term" value="C:cytosol"/>
    <property type="evidence" value="ECO:0000318"/>
    <property type="project" value="GO_Central"/>
</dbReference>
<dbReference type="GO" id="GO:0005524">
    <property type="term" value="F:ATP binding"/>
    <property type="evidence" value="ECO:0007669"/>
    <property type="project" value="UniProtKB-KW"/>
</dbReference>
<dbReference type="GO" id="GO:0016887">
    <property type="term" value="F:ATP hydrolysis activity"/>
    <property type="evidence" value="ECO:0000318"/>
    <property type="project" value="GO_Central"/>
</dbReference>
<dbReference type="GO" id="GO:0140662">
    <property type="term" value="F:ATP-dependent protein folding chaperone"/>
    <property type="evidence" value="ECO:0007669"/>
    <property type="project" value="InterPro"/>
</dbReference>
<dbReference type="GO" id="GO:0031072">
    <property type="term" value="F:heat shock protein binding"/>
    <property type="evidence" value="ECO:0000318"/>
    <property type="project" value="GO_Central"/>
</dbReference>
<dbReference type="GO" id="GO:0044183">
    <property type="term" value="F:protein folding chaperone"/>
    <property type="evidence" value="ECO:0000318"/>
    <property type="project" value="GO_Central"/>
</dbReference>
<dbReference type="GO" id="GO:0051082">
    <property type="term" value="F:unfolded protein binding"/>
    <property type="evidence" value="ECO:0007669"/>
    <property type="project" value="InterPro"/>
</dbReference>
<dbReference type="GO" id="GO:0051085">
    <property type="term" value="P:chaperone cofactor-dependent protein refolding"/>
    <property type="evidence" value="ECO:0000318"/>
    <property type="project" value="GO_Central"/>
</dbReference>
<dbReference type="GO" id="GO:0016226">
    <property type="term" value="P:iron-sulfur cluster assembly"/>
    <property type="evidence" value="ECO:0007669"/>
    <property type="project" value="InterPro"/>
</dbReference>
<dbReference type="GO" id="GO:0042026">
    <property type="term" value="P:protein refolding"/>
    <property type="evidence" value="ECO:0000318"/>
    <property type="project" value="GO_Central"/>
</dbReference>
<dbReference type="CDD" id="cd10236">
    <property type="entry name" value="ASKHA_NBD_HSP70_HscA"/>
    <property type="match status" value="1"/>
</dbReference>
<dbReference type="FunFam" id="3.30.420.40:FF:000046">
    <property type="entry name" value="Chaperone protein HscA"/>
    <property type="match status" value="1"/>
</dbReference>
<dbReference type="FunFam" id="2.60.34.10:FF:000005">
    <property type="entry name" value="Chaperone protein HscA homolog"/>
    <property type="match status" value="1"/>
</dbReference>
<dbReference type="Gene3D" id="1.20.1270.10">
    <property type="match status" value="1"/>
</dbReference>
<dbReference type="Gene3D" id="3.30.420.40">
    <property type="match status" value="2"/>
</dbReference>
<dbReference type="Gene3D" id="3.90.640.10">
    <property type="entry name" value="Actin, Chain A, domain 4"/>
    <property type="match status" value="1"/>
</dbReference>
<dbReference type="Gene3D" id="2.60.34.10">
    <property type="entry name" value="Substrate Binding Domain Of DNAk, Chain A, domain 1"/>
    <property type="match status" value="1"/>
</dbReference>
<dbReference type="HAMAP" id="MF_00679">
    <property type="entry name" value="HscA"/>
    <property type="match status" value="1"/>
</dbReference>
<dbReference type="InterPro" id="IPR043129">
    <property type="entry name" value="ATPase_NBD"/>
</dbReference>
<dbReference type="InterPro" id="IPR018181">
    <property type="entry name" value="Heat_shock_70_CS"/>
</dbReference>
<dbReference type="InterPro" id="IPR042039">
    <property type="entry name" value="HscA_NBD"/>
</dbReference>
<dbReference type="InterPro" id="IPR029048">
    <property type="entry name" value="HSP70_C_sf"/>
</dbReference>
<dbReference type="InterPro" id="IPR029047">
    <property type="entry name" value="HSP70_peptide-bd_sf"/>
</dbReference>
<dbReference type="InterPro" id="IPR013126">
    <property type="entry name" value="Hsp_70_fam"/>
</dbReference>
<dbReference type="InterPro" id="IPR010236">
    <property type="entry name" value="ISC_FeS_clus_asmbl_HscA"/>
</dbReference>
<dbReference type="NCBIfam" id="TIGR01991">
    <property type="entry name" value="HscA"/>
    <property type="match status" value="1"/>
</dbReference>
<dbReference type="NCBIfam" id="NF003520">
    <property type="entry name" value="PRK05183.1"/>
    <property type="match status" value="1"/>
</dbReference>
<dbReference type="PANTHER" id="PTHR19375">
    <property type="entry name" value="HEAT SHOCK PROTEIN 70KDA"/>
    <property type="match status" value="1"/>
</dbReference>
<dbReference type="Pfam" id="PF00012">
    <property type="entry name" value="HSP70"/>
    <property type="match status" value="1"/>
</dbReference>
<dbReference type="PRINTS" id="PR00301">
    <property type="entry name" value="HEATSHOCK70"/>
</dbReference>
<dbReference type="SUPFAM" id="SSF53067">
    <property type="entry name" value="Actin-like ATPase domain"/>
    <property type="match status" value="2"/>
</dbReference>
<dbReference type="SUPFAM" id="SSF100934">
    <property type="entry name" value="Heat shock protein 70kD (HSP70), C-terminal subdomain"/>
    <property type="match status" value="1"/>
</dbReference>
<dbReference type="SUPFAM" id="SSF100920">
    <property type="entry name" value="Heat shock protein 70kD (HSP70), peptide-binding domain"/>
    <property type="match status" value="1"/>
</dbReference>
<dbReference type="PROSITE" id="PS00297">
    <property type="entry name" value="HSP70_1"/>
    <property type="match status" value="1"/>
</dbReference>
<dbReference type="PROSITE" id="PS00329">
    <property type="entry name" value="HSP70_2"/>
    <property type="match status" value="1"/>
</dbReference>
<gene>
    <name evidence="1" type="primary">hscA</name>
    <name type="ordered locus">NMB1169</name>
</gene>
<gene>
    <name type="ordered locus">NMB1131</name>
</gene>
<organism>
    <name type="scientific">Neisseria meningitidis serogroup B (strain ATCC BAA-335 / MC58)</name>
    <dbReference type="NCBI Taxonomy" id="122586"/>
    <lineage>
        <taxon>Bacteria</taxon>
        <taxon>Pseudomonadati</taxon>
        <taxon>Pseudomonadota</taxon>
        <taxon>Betaproteobacteria</taxon>
        <taxon>Neisseriales</taxon>
        <taxon>Neisseriaceae</taxon>
        <taxon>Neisseria</taxon>
    </lineage>
</organism>
<sequence>MALLQISEPGMSAAPHRHRLAAGIDLGTTNSLVATVRSGSAACLPDAEGRVTLPSVVRYLENGGIEVGKTALSAQKTDPLNTVSSAKRLIGRTLADLHQNTHYLPYRFGDNQRVIELHTRQGVKTPVEVSAEILKTLKSRAEETLGGDLVGVVITVPAYFDDAQRQATKDAARLAGLNVLRLLNEPTAAAIAYGLDNASEGTFVVYDLGGGTFDVSVLQLTKGLFEVKATGGNSALGGDDFDHRLFCRLLEQNGLSQLNEQDSQLLLSLVRAAKEQLTTQTEARIQATLSDGMAIDTSISRAEFHNLTQHLVMKTLEPVTQALKDAGVGKNEVKGVIMVGGSTRMLHVQQAVATFFGQTPLNNLNPDEVVALGAAIQANVLAGNKTDGEWLLLDVTPLSLGLETYGGLAEKIIPRNSTIPTARAQDFTTFKDGQTAMTIHVVQGERELVADCRSLAKFTLRGIPPMAAGAARIRVTFQIDADGLLSVSAQEQSTGVQAQIEVKPSYGLDDDTITQMLKDSMSNAAEDMAARARAEAVVEAESLTDAVNAALELDSDLLDAEELQQIRQGIADLQGRLKDGKAEDIRAAAAKLGSITDNFAAKRMNRNIQRALTGQSVDNI</sequence>
<keyword id="KW-0067">ATP-binding</keyword>
<keyword id="KW-0143">Chaperone</keyword>
<keyword id="KW-0547">Nucleotide-binding</keyword>
<keyword id="KW-1185">Reference proteome</keyword>
<feature type="chain" id="PRO_0000078635" description="Chaperone protein HscA homolog">
    <location>
        <begin position="1"/>
        <end position="620"/>
    </location>
</feature>
<proteinExistence type="inferred from homology"/>
<protein>
    <recommendedName>
        <fullName evidence="1">Chaperone protein HscA homolog</fullName>
    </recommendedName>
</protein>
<comment type="function">
    <text evidence="1">Chaperone involved in the maturation of iron-sulfur cluster-containing proteins. Has a low intrinsic ATPase activity which is markedly stimulated by HscB.</text>
</comment>
<comment type="similarity">
    <text evidence="1">Belongs to the heat shock protein 70 family.</text>
</comment>
<name>HSCA_NEIMB</name>